<reference key="1">
    <citation type="journal article" date="1996" name="Microbiology">
        <title>Sequence analysis of a 50 kb region between spo0H and rrnH on the Bacillus subtilis chromosome.</title>
        <authorList>
            <person name="Yasumoto K."/>
            <person name="Liu H."/>
            <person name="Jeong S.M."/>
            <person name="Ohashi Y."/>
            <person name="Kakinuma S."/>
            <person name="Tanaka K."/>
            <person name="Kawamura F."/>
            <person name="Yoshikawa H."/>
            <person name="Takahashi H."/>
        </authorList>
    </citation>
    <scope>NUCLEOTIDE SEQUENCE [GENOMIC DNA]</scope>
    <source>
        <strain>168</strain>
    </source>
</reference>
<reference key="2">
    <citation type="journal article" date="1997" name="Nature">
        <title>The complete genome sequence of the Gram-positive bacterium Bacillus subtilis.</title>
        <authorList>
            <person name="Kunst F."/>
            <person name="Ogasawara N."/>
            <person name="Moszer I."/>
            <person name="Albertini A.M."/>
            <person name="Alloni G."/>
            <person name="Azevedo V."/>
            <person name="Bertero M.G."/>
            <person name="Bessieres P."/>
            <person name="Bolotin A."/>
            <person name="Borchert S."/>
            <person name="Borriss R."/>
            <person name="Boursier L."/>
            <person name="Brans A."/>
            <person name="Braun M."/>
            <person name="Brignell S.C."/>
            <person name="Bron S."/>
            <person name="Brouillet S."/>
            <person name="Bruschi C.V."/>
            <person name="Caldwell B."/>
            <person name="Capuano V."/>
            <person name="Carter N.M."/>
            <person name="Choi S.-K."/>
            <person name="Codani J.-J."/>
            <person name="Connerton I.F."/>
            <person name="Cummings N.J."/>
            <person name="Daniel R.A."/>
            <person name="Denizot F."/>
            <person name="Devine K.M."/>
            <person name="Duesterhoeft A."/>
            <person name="Ehrlich S.D."/>
            <person name="Emmerson P.T."/>
            <person name="Entian K.-D."/>
            <person name="Errington J."/>
            <person name="Fabret C."/>
            <person name="Ferrari E."/>
            <person name="Foulger D."/>
            <person name="Fritz C."/>
            <person name="Fujita M."/>
            <person name="Fujita Y."/>
            <person name="Fuma S."/>
            <person name="Galizzi A."/>
            <person name="Galleron N."/>
            <person name="Ghim S.-Y."/>
            <person name="Glaser P."/>
            <person name="Goffeau A."/>
            <person name="Golightly E.J."/>
            <person name="Grandi G."/>
            <person name="Guiseppi G."/>
            <person name="Guy B.J."/>
            <person name="Haga K."/>
            <person name="Haiech J."/>
            <person name="Harwood C.R."/>
            <person name="Henaut A."/>
            <person name="Hilbert H."/>
            <person name="Holsappel S."/>
            <person name="Hosono S."/>
            <person name="Hullo M.-F."/>
            <person name="Itaya M."/>
            <person name="Jones L.-M."/>
            <person name="Joris B."/>
            <person name="Karamata D."/>
            <person name="Kasahara Y."/>
            <person name="Klaerr-Blanchard M."/>
            <person name="Klein C."/>
            <person name="Kobayashi Y."/>
            <person name="Koetter P."/>
            <person name="Koningstein G."/>
            <person name="Krogh S."/>
            <person name="Kumano M."/>
            <person name="Kurita K."/>
            <person name="Lapidus A."/>
            <person name="Lardinois S."/>
            <person name="Lauber J."/>
            <person name="Lazarevic V."/>
            <person name="Lee S.-M."/>
            <person name="Levine A."/>
            <person name="Liu H."/>
            <person name="Masuda S."/>
            <person name="Mauel C."/>
            <person name="Medigue C."/>
            <person name="Medina N."/>
            <person name="Mellado R.P."/>
            <person name="Mizuno M."/>
            <person name="Moestl D."/>
            <person name="Nakai S."/>
            <person name="Noback M."/>
            <person name="Noone D."/>
            <person name="O'Reilly M."/>
            <person name="Ogawa K."/>
            <person name="Ogiwara A."/>
            <person name="Oudega B."/>
            <person name="Park S.-H."/>
            <person name="Parro V."/>
            <person name="Pohl T.M."/>
            <person name="Portetelle D."/>
            <person name="Porwollik S."/>
            <person name="Prescott A.M."/>
            <person name="Presecan E."/>
            <person name="Pujic P."/>
            <person name="Purnelle B."/>
            <person name="Rapoport G."/>
            <person name="Rey M."/>
            <person name="Reynolds S."/>
            <person name="Rieger M."/>
            <person name="Rivolta C."/>
            <person name="Rocha E."/>
            <person name="Roche B."/>
            <person name="Rose M."/>
            <person name="Sadaie Y."/>
            <person name="Sato T."/>
            <person name="Scanlan E."/>
            <person name="Schleich S."/>
            <person name="Schroeter R."/>
            <person name="Scoffone F."/>
            <person name="Sekiguchi J."/>
            <person name="Sekowska A."/>
            <person name="Seror S.J."/>
            <person name="Serror P."/>
            <person name="Shin B.-S."/>
            <person name="Soldo B."/>
            <person name="Sorokin A."/>
            <person name="Tacconi E."/>
            <person name="Takagi T."/>
            <person name="Takahashi H."/>
            <person name="Takemaru K."/>
            <person name="Takeuchi M."/>
            <person name="Tamakoshi A."/>
            <person name="Tanaka T."/>
            <person name="Terpstra P."/>
            <person name="Tognoni A."/>
            <person name="Tosato V."/>
            <person name="Uchiyama S."/>
            <person name="Vandenbol M."/>
            <person name="Vannier F."/>
            <person name="Vassarotti A."/>
            <person name="Viari A."/>
            <person name="Wambutt R."/>
            <person name="Wedler E."/>
            <person name="Wedler H."/>
            <person name="Weitzenegger T."/>
            <person name="Winters P."/>
            <person name="Wipat A."/>
            <person name="Yamamoto H."/>
            <person name="Yamane K."/>
            <person name="Yasumoto K."/>
            <person name="Yata K."/>
            <person name="Yoshida K."/>
            <person name="Yoshikawa H.-F."/>
            <person name="Zumstein E."/>
            <person name="Yoshikawa H."/>
            <person name="Danchin A."/>
        </authorList>
    </citation>
    <scope>NUCLEOTIDE SEQUENCE [LARGE SCALE GENOMIC DNA]</scope>
    <source>
        <strain>168</strain>
    </source>
</reference>
<reference key="3">
    <citation type="journal article" date="2009" name="Microbiology">
        <title>From a consortium sequence to a unified sequence: the Bacillus subtilis 168 reference genome a decade later.</title>
        <authorList>
            <person name="Barbe V."/>
            <person name="Cruveiller S."/>
            <person name="Kunst F."/>
            <person name="Lenoble P."/>
            <person name="Meurice G."/>
            <person name="Sekowska A."/>
            <person name="Vallenet D."/>
            <person name="Wang T."/>
            <person name="Moszer I."/>
            <person name="Medigue C."/>
            <person name="Danchin A."/>
        </authorList>
    </citation>
    <scope>SEQUENCE REVISION TO 16</scope>
</reference>
<reference key="4">
    <citation type="journal article" date="2000" name="J. Bacteriol.">
        <title>The Bacillus subtilis GTP binding protein obg and regulators of the sigma(B) stress response transcription factor cofractionate with ribosomes.</title>
        <authorList>
            <person name="Scott J.M."/>
            <person name="Ju J."/>
            <person name="Mitchell T."/>
            <person name="Haldenwang W.G."/>
        </authorList>
    </citation>
    <scope>PROTEIN SEQUENCE OF 1-12</scope>
    <scope>SUBUNIT</scope>
    <scope>BINDING TO OBG</scope>
    <source>
        <strain>PY22</strain>
    </source>
</reference>
<reference evidence="5 6" key="5">
    <citation type="journal article" date="2018" name="Proc. Natl. Acad. Sci. U.S.A.">
        <title>Structural basis for antibiotic resistance mediated by the Bacillus subtilis ABCF ATPase VmlR.</title>
        <authorList>
            <person name="Crowe-McAuliffe C."/>
            <person name="Graf M."/>
            <person name="Huter P."/>
            <person name="Takada H."/>
            <person name="Abdelshahid M."/>
            <person name="Novacek J."/>
            <person name="Murina V."/>
            <person name="Atkinson G.C."/>
            <person name="Hauryliuk V."/>
            <person name="Wilson D.N."/>
        </authorList>
    </citation>
    <scope>STRUCTURE BY ELECTRON MICROSCOPY (3.10 ANGSTROMS) OF 1-145 WITH AND WITHOUT VIRGINIAMYCIN M</scope>
</reference>
<comment type="function">
    <text evidence="1">This protein is one of the early assembly proteins of the 50S ribosomal subunit, although it is not seen to bind rRNA by itself. It is important during the early stages of 50S assembly.</text>
</comment>
<comment type="subunit">
    <text evidence="2 3">Part of the 50S ribosomal subunit (PubMed:30126986). Binds to Obg (AC P20964) (PubMed:10781545).</text>
</comment>
<comment type="similarity">
    <text evidence="1">Belongs to the universal ribosomal protein uL13 family.</text>
</comment>
<keyword id="KW-0002">3D-structure</keyword>
<keyword id="KW-0903">Direct protein sequencing</keyword>
<keyword id="KW-1185">Reference proteome</keyword>
<keyword id="KW-0687">Ribonucleoprotein</keyword>
<keyword id="KW-0689">Ribosomal protein</keyword>
<feature type="chain" id="PRO_0000133725" description="Large ribosomal subunit protein uL13">
    <location>
        <begin position="1"/>
        <end position="145"/>
    </location>
</feature>
<feature type="sequence conflict" description="In Ref. 1; BAA10988." evidence="4" ref="1">
    <original>W</original>
    <variation>C</variation>
    <location>
        <position position="16"/>
    </location>
</feature>
<feature type="turn" evidence="10">
    <location>
        <begin position="9"/>
        <end position="11"/>
    </location>
</feature>
<feature type="strand" evidence="10">
    <location>
        <begin position="16"/>
        <end position="20"/>
    </location>
</feature>
<feature type="strand" evidence="7">
    <location>
        <begin position="22"/>
        <end position="24"/>
    </location>
</feature>
<feature type="helix" evidence="10">
    <location>
        <begin position="26"/>
        <end position="38"/>
    </location>
</feature>
<feature type="turn" evidence="10">
    <location>
        <begin position="39"/>
        <end position="41"/>
    </location>
</feature>
<feature type="strand" evidence="8">
    <location>
        <begin position="42"/>
        <end position="44"/>
    </location>
</feature>
<feature type="turn" evidence="7">
    <location>
        <begin position="47"/>
        <end position="49"/>
    </location>
</feature>
<feature type="strand" evidence="10">
    <location>
        <begin position="54"/>
        <end position="58"/>
    </location>
</feature>
<feature type="helix" evidence="10">
    <location>
        <begin position="60"/>
        <end position="62"/>
    </location>
</feature>
<feature type="helix" evidence="10">
    <location>
        <begin position="69"/>
        <end position="72"/>
    </location>
</feature>
<feature type="strand" evidence="10">
    <location>
        <begin position="74"/>
        <end position="78"/>
    </location>
</feature>
<feature type="strand" evidence="9">
    <location>
        <begin position="80"/>
        <end position="83"/>
    </location>
</feature>
<feature type="strand" evidence="10">
    <location>
        <begin position="85"/>
        <end position="89"/>
    </location>
</feature>
<feature type="helix" evidence="10">
    <location>
        <begin position="90"/>
        <end position="96"/>
    </location>
</feature>
<feature type="helix" evidence="10">
    <location>
        <begin position="98"/>
        <end position="109"/>
    </location>
</feature>
<feature type="helix" evidence="10">
    <location>
        <begin position="114"/>
        <end position="120"/>
    </location>
</feature>
<feature type="strand" evidence="10">
    <location>
        <begin position="123"/>
        <end position="125"/>
    </location>
</feature>
<feature type="strand" evidence="10">
    <location>
        <begin position="127"/>
        <end position="129"/>
    </location>
</feature>
<feature type="helix" evidence="10">
    <location>
        <begin position="134"/>
        <end position="136"/>
    </location>
</feature>
<accession>P70974</accession>
<gene>
    <name evidence="1" type="primary">rplM</name>
    <name type="ordered locus">BSU01490</name>
</gene>
<dbReference type="EMBL" id="D64126">
    <property type="protein sequence ID" value="BAA10988.1"/>
    <property type="molecule type" value="Genomic_DNA"/>
</dbReference>
<dbReference type="EMBL" id="AL009126">
    <property type="protein sequence ID" value="CAB11925.2"/>
    <property type="molecule type" value="Genomic_DNA"/>
</dbReference>
<dbReference type="PIR" id="G69695">
    <property type="entry name" value="G69695"/>
</dbReference>
<dbReference type="RefSeq" id="NP_388030.2">
    <property type="nucleotide sequence ID" value="NC_000964.3"/>
</dbReference>
<dbReference type="RefSeq" id="WP_003241966.1">
    <property type="nucleotide sequence ID" value="NZ_OZ025638.1"/>
</dbReference>
<dbReference type="PDB" id="3J3V">
    <property type="method" value="EM"/>
    <property type="resolution" value="13.30 A"/>
    <property type="chains" value="J=1-145"/>
</dbReference>
<dbReference type="PDB" id="3J3W">
    <property type="method" value="EM"/>
    <property type="resolution" value="10.70 A"/>
    <property type="chains" value="J=1-145"/>
</dbReference>
<dbReference type="PDB" id="3J9W">
    <property type="method" value="EM"/>
    <property type="resolution" value="3.90 A"/>
    <property type="chains" value="BM=1-145"/>
</dbReference>
<dbReference type="PDB" id="5NJT">
    <property type="method" value="EM"/>
    <property type="resolution" value="3.80 A"/>
    <property type="chains" value="c=4-145"/>
</dbReference>
<dbReference type="PDB" id="6HA1">
    <property type="method" value="EM"/>
    <property type="resolution" value="3.10 A"/>
    <property type="chains" value="J=1-145"/>
</dbReference>
<dbReference type="PDB" id="6HA8">
    <property type="method" value="EM"/>
    <property type="resolution" value="3.50 A"/>
    <property type="chains" value="J=1-145"/>
</dbReference>
<dbReference type="PDB" id="6HTQ">
    <property type="method" value="EM"/>
    <property type="resolution" value="4.50 A"/>
    <property type="chains" value="J=4-145"/>
</dbReference>
<dbReference type="PDB" id="6PPF">
    <property type="method" value="EM"/>
    <property type="resolution" value="3.40 A"/>
    <property type="chains" value="J=1-145"/>
</dbReference>
<dbReference type="PDB" id="6PPK">
    <property type="method" value="EM"/>
    <property type="resolution" value="4.40 A"/>
    <property type="chains" value="J=1-145"/>
</dbReference>
<dbReference type="PDB" id="6PVK">
    <property type="method" value="EM"/>
    <property type="resolution" value="3.40 A"/>
    <property type="chains" value="J=1-145"/>
</dbReference>
<dbReference type="PDB" id="6TNN">
    <property type="method" value="EM"/>
    <property type="resolution" value="3.07 A"/>
    <property type="chains" value="c=1-145"/>
</dbReference>
<dbReference type="PDB" id="6TPQ">
    <property type="method" value="EM"/>
    <property type="resolution" value="3.07 A"/>
    <property type="chains" value="c=1-145"/>
</dbReference>
<dbReference type="PDB" id="7AQC">
    <property type="method" value="EM"/>
    <property type="resolution" value="2.99 A"/>
    <property type="chains" value="J=1-145"/>
</dbReference>
<dbReference type="PDB" id="7AQD">
    <property type="method" value="EM"/>
    <property type="resolution" value="3.10 A"/>
    <property type="chains" value="J=1-145"/>
</dbReference>
<dbReference type="PDB" id="7AS8">
    <property type="method" value="EM"/>
    <property type="resolution" value="2.90 A"/>
    <property type="chains" value="N=1-145"/>
</dbReference>
<dbReference type="PDB" id="7AS9">
    <property type="method" value="EM"/>
    <property type="resolution" value="3.50 A"/>
    <property type="chains" value="N=1-145"/>
</dbReference>
<dbReference type="PDB" id="7O5B">
    <property type="method" value="EM"/>
    <property type="resolution" value="3.33 A"/>
    <property type="chains" value="e=1-145"/>
</dbReference>
<dbReference type="PDB" id="7OPE">
    <property type="method" value="EM"/>
    <property type="resolution" value="3.20 A"/>
    <property type="chains" value="N=1-145"/>
</dbReference>
<dbReference type="PDB" id="7QGU">
    <property type="method" value="EM"/>
    <property type="resolution" value="4.75 A"/>
    <property type="chains" value="J=1-145"/>
</dbReference>
<dbReference type="PDB" id="7QH4">
    <property type="method" value="EM"/>
    <property type="resolution" value="5.45 A"/>
    <property type="chains" value="J=1-145"/>
</dbReference>
<dbReference type="PDB" id="7QV1">
    <property type="method" value="EM"/>
    <property type="resolution" value="3.50 A"/>
    <property type="chains" value="J=1-145"/>
</dbReference>
<dbReference type="PDB" id="7QV2">
    <property type="method" value="EM"/>
    <property type="resolution" value="3.50 A"/>
    <property type="chains" value="J=1-145"/>
</dbReference>
<dbReference type="PDB" id="7QV3">
    <property type="method" value="EM"/>
    <property type="resolution" value="5.14 A"/>
    <property type="chains" value="J=1-145"/>
</dbReference>
<dbReference type="PDB" id="7S9U">
    <property type="method" value="EM"/>
    <property type="resolution" value="3.20 A"/>
    <property type="chains" value="J=1-145"/>
</dbReference>
<dbReference type="PDB" id="7SAE">
    <property type="method" value="EM"/>
    <property type="resolution" value="3.00 A"/>
    <property type="chains" value="J=1-145"/>
</dbReference>
<dbReference type="PDB" id="8BUU">
    <property type="method" value="EM"/>
    <property type="resolution" value="2.90 A"/>
    <property type="chains" value="J=1-145"/>
</dbReference>
<dbReference type="PDB" id="8QCQ">
    <property type="method" value="EM"/>
    <property type="resolution" value="2.30 A"/>
    <property type="chains" value="J=1-145"/>
</dbReference>
<dbReference type="PDB" id="8QPP">
    <property type="method" value="EM"/>
    <property type="resolution" value="3.40 A"/>
    <property type="chains" value="e=4-145"/>
</dbReference>
<dbReference type="PDB" id="8R55">
    <property type="method" value="EM"/>
    <property type="resolution" value="3.57 A"/>
    <property type="chains" value="e=4-145"/>
</dbReference>
<dbReference type="PDB" id="8S1P">
    <property type="method" value="EM"/>
    <property type="resolution" value="1.96 A"/>
    <property type="chains" value="J=1-145"/>
</dbReference>
<dbReference type="PDB" id="8S1U">
    <property type="method" value="EM"/>
    <property type="resolution" value="3.40 A"/>
    <property type="chains" value="J=1-145"/>
</dbReference>
<dbReference type="PDB" id="9BS0">
    <property type="method" value="EM"/>
    <property type="resolution" value="3.30 A"/>
    <property type="chains" value="G=1-145"/>
</dbReference>
<dbReference type="PDB" id="9BSL">
    <property type="method" value="EM"/>
    <property type="resolution" value="3.10 A"/>
    <property type="chains" value="G=1-145"/>
</dbReference>
<dbReference type="PDB" id="9BSS">
    <property type="method" value="EM"/>
    <property type="resolution" value="3.10 A"/>
    <property type="chains" value="G=1-145"/>
</dbReference>
<dbReference type="PDBsum" id="3J3V"/>
<dbReference type="PDBsum" id="3J3W"/>
<dbReference type="PDBsum" id="3J9W"/>
<dbReference type="PDBsum" id="5NJT"/>
<dbReference type="PDBsum" id="6HA1"/>
<dbReference type="PDBsum" id="6HA8"/>
<dbReference type="PDBsum" id="6HTQ"/>
<dbReference type="PDBsum" id="6PPF"/>
<dbReference type="PDBsum" id="6PPK"/>
<dbReference type="PDBsum" id="6PVK"/>
<dbReference type="PDBsum" id="6TNN"/>
<dbReference type="PDBsum" id="6TPQ"/>
<dbReference type="PDBsum" id="7AQC"/>
<dbReference type="PDBsum" id="7AQD"/>
<dbReference type="PDBsum" id="7AS8"/>
<dbReference type="PDBsum" id="7AS9"/>
<dbReference type="PDBsum" id="7O5B"/>
<dbReference type="PDBsum" id="7OPE"/>
<dbReference type="PDBsum" id="7QGU"/>
<dbReference type="PDBsum" id="7QH4"/>
<dbReference type="PDBsum" id="7QV1"/>
<dbReference type="PDBsum" id="7QV2"/>
<dbReference type="PDBsum" id="7QV3"/>
<dbReference type="PDBsum" id="7S9U"/>
<dbReference type="PDBsum" id="7SAE"/>
<dbReference type="PDBsum" id="8BUU"/>
<dbReference type="PDBsum" id="8QCQ"/>
<dbReference type="PDBsum" id="8QPP"/>
<dbReference type="PDBsum" id="8R55"/>
<dbReference type="PDBsum" id="8S1P"/>
<dbReference type="PDBsum" id="8S1U"/>
<dbReference type="PDBsum" id="9BS0"/>
<dbReference type="PDBsum" id="9BSL"/>
<dbReference type="PDBsum" id="9BSS"/>
<dbReference type="EMDB" id="EMD-0176"/>
<dbReference type="EMDB" id="EMD-0177"/>
<dbReference type="EMDB" id="EMD-0270"/>
<dbReference type="EMDB" id="EMD-10535"/>
<dbReference type="EMDB" id="EMD-10543"/>
<dbReference type="EMDB" id="EMD-11862"/>
<dbReference type="EMDB" id="EMD-11864"/>
<dbReference type="EMDB" id="EMD-11889"/>
<dbReference type="EMDB" id="EMD-11890"/>
<dbReference type="EMDB" id="EMD-12734"/>
<dbReference type="EMDB" id="EMD-13017"/>
<dbReference type="EMDB" id="EMD-14157"/>
<dbReference type="EMDB" id="EMD-14158"/>
<dbReference type="EMDB" id="EMD-14159"/>
<dbReference type="EMDB" id="EMD-16246"/>
<dbReference type="EMDB" id="EMD-18332"/>
<dbReference type="EMDB" id="EMD-19638"/>
<dbReference type="EMDB" id="EMD-19641"/>
<dbReference type="EMDB" id="EMD-3656"/>
<dbReference type="EMDB" id="EMD-44849"/>
<dbReference type="EMDB" id="EMD-44869"/>
<dbReference type="EMDB" id="EMD-44871"/>
<dbReference type="SMR" id="P70974"/>
<dbReference type="FunCoup" id="P70974">
    <property type="interactions" value="724"/>
</dbReference>
<dbReference type="IntAct" id="P70974">
    <property type="interactions" value="1"/>
</dbReference>
<dbReference type="STRING" id="224308.BSU01490"/>
<dbReference type="jPOST" id="P70974"/>
<dbReference type="PaxDb" id="224308-BSU01490"/>
<dbReference type="EnsemblBacteria" id="CAB11925">
    <property type="protein sequence ID" value="CAB11925"/>
    <property type="gene ID" value="BSU_01490"/>
</dbReference>
<dbReference type="GeneID" id="86875452"/>
<dbReference type="GeneID" id="938915"/>
<dbReference type="KEGG" id="bsu:BSU01490"/>
<dbReference type="PATRIC" id="fig|224308.179.peg.153"/>
<dbReference type="eggNOG" id="COG0102">
    <property type="taxonomic scope" value="Bacteria"/>
</dbReference>
<dbReference type="InParanoid" id="P70974"/>
<dbReference type="OrthoDB" id="9801330at2"/>
<dbReference type="PhylomeDB" id="P70974"/>
<dbReference type="BioCyc" id="BSUB:BSU01490-MONOMER"/>
<dbReference type="EvolutionaryTrace" id="P70974"/>
<dbReference type="PRO" id="PR:P70974"/>
<dbReference type="Proteomes" id="UP000001570">
    <property type="component" value="Chromosome"/>
</dbReference>
<dbReference type="GO" id="GO:0022625">
    <property type="term" value="C:cytosolic large ribosomal subunit"/>
    <property type="evidence" value="ECO:0000318"/>
    <property type="project" value="GO_Central"/>
</dbReference>
<dbReference type="GO" id="GO:0005840">
    <property type="term" value="C:ribosome"/>
    <property type="evidence" value="ECO:0000318"/>
    <property type="project" value="GO_Central"/>
</dbReference>
<dbReference type="GO" id="GO:0003729">
    <property type="term" value="F:mRNA binding"/>
    <property type="evidence" value="ECO:0000318"/>
    <property type="project" value="GO_Central"/>
</dbReference>
<dbReference type="GO" id="GO:0003735">
    <property type="term" value="F:structural constituent of ribosome"/>
    <property type="evidence" value="ECO:0000318"/>
    <property type="project" value="GO_Central"/>
</dbReference>
<dbReference type="GO" id="GO:0017148">
    <property type="term" value="P:negative regulation of translation"/>
    <property type="evidence" value="ECO:0000318"/>
    <property type="project" value="GO_Central"/>
</dbReference>
<dbReference type="GO" id="GO:0006412">
    <property type="term" value="P:translation"/>
    <property type="evidence" value="ECO:0007669"/>
    <property type="project" value="UniProtKB-UniRule"/>
</dbReference>
<dbReference type="CDD" id="cd00392">
    <property type="entry name" value="Ribosomal_L13"/>
    <property type="match status" value="1"/>
</dbReference>
<dbReference type="FunFam" id="3.90.1180.10:FF:000001">
    <property type="entry name" value="50S ribosomal protein L13"/>
    <property type="match status" value="1"/>
</dbReference>
<dbReference type="Gene3D" id="3.90.1180.10">
    <property type="entry name" value="Ribosomal protein L13"/>
    <property type="match status" value="1"/>
</dbReference>
<dbReference type="HAMAP" id="MF_01366">
    <property type="entry name" value="Ribosomal_uL13"/>
    <property type="match status" value="1"/>
</dbReference>
<dbReference type="InterPro" id="IPR005822">
    <property type="entry name" value="Ribosomal_uL13"/>
</dbReference>
<dbReference type="InterPro" id="IPR005823">
    <property type="entry name" value="Ribosomal_uL13_bac-type"/>
</dbReference>
<dbReference type="InterPro" id="IPR023563">
    <property type="entry name" value="Ribosomal_uL13_CS"/>
</dbReference>
<dbReference type="InterPro" id="IPR036899">
    <property type="entry name" value="Ribosomal_uL13_sf"/>
</dbReference>
<dbReference type="NCBIfam" id="TIGR01066">
    <property type="entry name" value="rplM_bact"/>
    <property type="match status" value="1"/>
</dbReference>
<dbReference type="PANTHER" id="PTHR11545:SF2">
    <property type="entry name" value="LARGE RIBOSOMAL SUBUNIT PROTEIN UL13M"/>
    <property type="match status" value="1"/>
</dbReference>
<dbReference type="PANTHER" id="PTHR11545">
    <property type="entry name" value="RIBOSOMAL PROTEIN L13"/>
    <property type="match status" value="1"/>
</dbReference>
<dbReference type="Pfam" id="PF00572">
    <property type="entry name" value="Ribosomal_L13"/>
    <property type="match status" value="1"/>
</dbReference>
<dbReference type="PIRSF" id="PIRSF002181">
    <property type="entry name" value="Ribosomal_L13"/>
    <property type="match status" value="1"/>
</dbReference>
<dbReference type="SUPFAM" id="SSF52161">
    <property type="entry name" value="Ribosomal protein L13"/>
    <property type="match status" value="1"/>
</dbReference>
<dbReference type="PROSITE" id="PS00783">
    <property type="entry name" value="RIBOSOMAL_L13"/>
    <property type="match status" value="1"/>
</dbReference>
<evidence type="ECO:0000255" key="1">
    <source>
        <dbReference type="HAMAP-Rule" id="MF_01366"/>
    </source>
</evidence>
<evidence type="ECO:0000269" key="2">
    <source>
    </source>
</evidence>
<evidence type="ECO:0000269" key="3">
    <source>
    </source>
</evidence>
<evidence type="ECO:0000305" key="4"/>
<evidence type="ECO:0007744" key="5">
    <source>
        <dbReference type="PDB" id="6HA1"/>
    </source>
</evidence>
<evidence type="ECO:0007744" key="6">
    <source>
        <dbReference type="PDB" id="6HA8"/>
    </source>
</evidence>
<evidence type="ECO:0007829" key="7">
    <source>
        <dbReference type="PDB" id="7AQC"/>
    </source>
</evidence>
<evidence type="ECO:0007829" key="8">
    <source>
        <dbReference type="PDB" id="7AS8"/>
    </source>
</evidence>
<evidence type="ECO:0007829" key="9">
    <source>
        <dbReference type="PDB" id="7SAE"/>
    </source>
</evidence>
<evidence type="ECO:0007829" key="10">
    <source>
        <dbReference type="PDB" id="8S1P"/>
    </source>
</evidence>
<proteinExistence type="evidence at protein level"/>
<name>RL13_BACSU</name>
<sequence>MRTTPMANASTIERKWLVVDAAGKTLGRLSSEVAAILRGKHKPTYTPHVDTGDHVIIINAEKIELTGKKLTDKIYYRHTQHPGGLKSRTALEMRTNYPEKMLELAIKGMLPKGSLGRQMFKKLNVYRGSEHPHEAQKPEVYELRG</sequence>
<organism>
    <name type="scientific">Bacillus subtilis (strain 168)</name>
    <dbReference type="NCBI Taxonomy" id="224308"/>
    <lineage>
        <taxon>Bacteria</taxon>
        <taxon>Bacillati</taxon>
        <taxon>Bacillota</taxon>
        <taxon>Bacilli</taxon>
        <taxon>Bacillales</taxon>
        <taxon>Bacillaceae</taxon>
        <taxon>Bacillus</taxon>
    </lineage>
</organism>
<protein>
    <recommendedName>
        <fullName evidence="1">Large ribosomal subunit protein uL13</fullName>
    </recommendedName>
    <alternativeName>
        <fullName evidence="4">50S ribosomal protein L13</fullName>
    </alternativeName>
</protein>